<gene>
    <name evidence="1" type="primary">rplK</name>
    <name type="ordered locus">EUBREC_0374</name>
</gene>
<organism>
    <name type="scientific">Agathobacter rectalis (strain ATCC 33656 / DSM 3377 / JCM 17463 / KCTC 5835 / VPI 0990)</name>
    <name type="common">Eubacterium rectale</name>
    <dbReference type="NCBI Taxonomy" id="515619"/>
    <lineage>
        <taxon>Bacteria</taxon>
        <taxon>Bacillati</taxon>
        <taxon>Bacillota</taxon>
        <taxon>Clostridia</taxon>
        <taxon>Lachnospirales</taxon>
        <taxon>Lachnospiraceae</taxon>
        <taxon>Agathobacter</taxon>
    </lineage>
</organism>
<sequence>MAKKVEGYIKLQIPAGKATPAPPVGPALGQHGVNIVEFTKQFNAKTADQGDLIIPVVITVYADRSFSFITKTPPAPVLIKKACKIQSGSGEPNKKKVAKITKAQVQEIAELKMPDLNAASLESAMSMIAGTARSMGVEVTE</sequence>
<proteinExistence type="inferred from homology"/>
<reference key="1">
    <citation type="journal article" date="2009" name="Proc. Natl. Acad. Sci. U.S.A.">
        <title>Characterizing a model human gut microbiota composed of members of its two dominant bacterial phyla.</title>
        <authorList>
            <person name="Mahowald M.A."/>
            <person name="Rey F.E."/>
            <person name="Seedorf H."/>
            <person name="Turnbaugh P.J."/>
            <person name="Fulton R.S."/>
            <person name="Wollam A."/>
            <person name="Shah N."/>
            <person name="Wang C."/>
            <person name="Magrini V."/>
            <person name="Wilson R.K."/>
            <person name="Cantarel B.L."/>
            <person name="Coutinho P.M."/>
            <person name="Henrissat B."/>
            <person name="Crock L.W."/>
            <person name="Russell A."/>
            <person name="Verberkmoes N.C."/>
            <person name="Hettich R.L."/>
            <person name="Gordon J.I."/>
        </authorList>
    </citation>
    <scope>NUCLEOTIDE SEQUENCE [LARGE SCALE GENOMIC DNA]</scope>
    <source>
        <strain>ATCC 33656 / DSM 3377 / JCM 17463 / KCTC 5835 / LMG 30912 / VPI 0990</strain>
    </source>
</reference>
<protein>
    <recommendedName>
        <fullName evidence="1">Large ribosomal subunit protein uL11</fullName>
    </recommendedName>
    <alternativeName>
        <fullName evidence="2">50S ribosomal protein L11</fullName>
    </alternativeName>
</protein>
<name>RL11_AGARV</name>
<dbReference type="EMBL" id="CP001107">
    <property type="protein sequence ID" value="ACR74165.1"/>
    <property type="molecule type" value="Genomic_DNA"/>
</dbReference>
<dbReference type="RefSeq" id="WP_012741286.1">
    <property type="nucleotide sequence ID" value="NC_012781.1"/>
</dbReference>
<dbReference type="SMR" id="C4ZB90"/>
<dbReference type="STRING" id="515619.EUBREC_0374"/>
<dbReference type="PaxDb" id="515619-EUBREC_0374"/>
<dbReference type="GeneID" id="86987288"/>
<dbReference type="KEGG" id="ere:EUBREC_0374"/>
<dbReference type="HOGENOM" id="CLU_074237_2_1_9"/>
<dbReference type="Proteomes" id="UP000001477">
    <property type="component" value="Chromosome"/>
</dbReference>
<dbReference type="GO" id="GO:0022625">
    <property type="term" value="C:cytosolic large ribosomal subunit"/>
    <property type="evidence" value="ECO:0007669"/>
    <property type="project" value="TreeGrafter"/>
</dbReference>
<dbReference type="GO" id="GO:0070180">
    <property type="term" value="F:large ribosomal subunit rRNA binding"/>
    <property type="evidence" value="ECO:0007669"/>
    <property type="project" value="UniProtKB-UniRule"/>
</dbReference>
<dbReference type="GO" id="GO:0003735">
    <property type="term" value="F:structural constituent of ribosome"/>
    <property type="evidence" value="ECO:0007669"/>
    <property type="project" value="InterPro"/>
</dbReference>
<dbReference type="GO" id="GO:0006412">
    <property type="term" value="P:translation"/>
    <property type="evidence" value="ECO:0007669"/>
    <property type="project" value="UniProtKB-UniRule"/>
</dbReference>
<dbReference type="CDD" id="cd00349">
    <property type="entry name" value="Ribosomal_L11"/>
    <property type="match status" value="1"/>
</dbReference>
<dbReference type="FunFam" id="1.10.10.250:FF:000001">
    <property type="entry name" value="50S ribosomal protein L11"/>
    <property type="match status" value="1"/>
</dbReference>
<dbReference type="FunFam" id="3.30.1550.10:FF:000001">
    <property type="entry name" value="50S ribosomal protein L11"/>
    <property type="match status" value="1"/>
</dbReference>
<dbReference type="Gene3D" id="1.10.10.250">
    <property type="entry name" value="Ribosomal protein L11, C-terminal domain"/>
    <property type="match status" value="1"/>
</dbReference>
<dbReference type="Gene3D" id="3.30.1550.10">
    <property type="entry name" value="Ribosomal protein L11/L12, N-terminal domain"/>
    <property type="match status" value="1"/>
</dbReference>
<dbReference type="HAMAP" id="MF_00736">
    <property type="entry name" value="Ribosomal_uL11"/>
    <property type="match status" value="1"/>
</dbReference>
<dbReference type="InterPro" id="IPR000911">
    <property type="entry name" value="Ribosomal_uL11"/>
</dbReference>
<dbReference type="InterPro" id="IPR006519">
    <property type="entry name" value="Ribosomal_uL11_bac-typ"/>
</dbReference>
<dbReference type="InterPro" id="IPR020783">
    <property type="entry name" value="Ribosomal_uL11_C"/>
</dbReference>
<dbReference type="InterPro" id="IPR036769">
    <property type="entry name" value="Ribosomal_uL11_C_sf"/>
</dbReference>
<dbReference type="InterPro" id="IPR020784">
    <property type="entry name" value="Ribosomal_uL11_N"/>
</dbReference>
<dbReference type="InterPro" id="IPR036796">
    <property type="entry name" value="Ribosomal_uL11_N_sf"/>
</dbReference>
<dbReference type="NCBIfam" id="TIGR01632">
    <property type="entry name" value="L11_bact"/>
    <property type="match status" value="1"/>
</dbReference>
<dbReference type="PANTHER" id="PTHR11661">
    <property type="entry name" value="60S RIBOSOMAL PROTEIN L12"/>
    <property type="match status" value="1"/>
</dbReference>
<dbReference type="PANTHER" id="PTHR11661:SF1">
    <property type="entry name" value="LARGE RIBOSOMAL SUBUNIT PROTEIN UL11M"/>
    <property type="match status" value="1"/>
</dbReference>
<dbReference type="Pfam" id="PF00298">
    <property type="entry name" value="Ribosomal_L11"/>
    <property type="match status" value="1"/>
</dbReference>
<dbReference type="Pfam" id="PF03946">
    <property type="entry name" value="Ribosomal_L11_N"/>
    <property type="match status" value="1"/>
</dbReference>
<dbReference type="SMART" id="SM00649">
    <property type="entry name" value="RL11"/>
    <property type="match status" value="1"/>
</dbReference>
<dbReference type="SUPFAM" id="SSF54747">
    <property type="entry name" value="Ribosomal L11/L12e N-terminal domain"/>
    <property type="match status" value="1"/>
</dbReference>
<dbReference type="SUPFAM" id="SSF46906">
    <property type="entry name" value="Ribosomal protein L11, C-terminal domain"/>
    <property type="match status" value="1"/>
</dbReference>
<accession>C4ZB90</accession>
<evidence type="ECO:0000255" key="1">
    <source>
        <dbReference type="HAMAP-Rule" id="MF_00736"/>
    </source>
</evidence>
<evidence type="ECO:0000305" key="2"/>
<keyword id="KW-0488">Methylation</keyword>
<keyword id="KW-0687">Ribonucleoprotein</keyword>
<keyword id="KW-0689">Ribosomal protein</keyword>
<keyword id="KW-0694">RNA-binding</keyword>
<keyword id="KW-0699">rRNA-binding</keyword>
<feature type="chain" id="PRO_1000212773" description="Large ribosomal subunit protein uL11">
    <location>
        <begin position="1"/>
        <end position="141"/>
    </location>
</feature>
<comment type="function">
    <text evidence="1">Forms part of the ribosomal stalk which helps the ribosome interact with GTP-bound translation factors.</text>
</comment>
<comment type="subunit">
    <text evidence="1">Part of the ribosomal stalk of the 50S ribosomal subunit. Interacts with L10 and the large rRNA to form the base of the stalk. L10 forms an elongated spine to which L12 dimers bind in a sequential fashion forming a multimeric L10(L12)X complex.</text>
</comment>
<comment type="PTM">
    <text evidence="1">One or more lysine residues are methylated.</text>
</comment>
<comment type="similarity">
    <text evidence="1">Belongs to the universal ribosomal protein uL11 family.</text>
</comment>